<accession>Q40359</accession>
<evidence type="ECO:0000250" key="1"/>
<evidence type="ECO:0000255" key="2">
    <source>
        <dbReference type="PROSITE-ProRule" id="PRU00146"/>
    </source>
</evidence>
<evidence type="ECO:0000256" key="3">
    <source>
        <dbReference type="SAM" id="MobiDB-lite"/>
    </source>
</evidence>
<evidence type="ECO:0000269" key="4">
    <source>
    </source>
</evidence>
<evidence type="ECO:0000269" key="5">
    <source>
    </source>
</evidence>
<evidence type="ECO:0000269" key="6">
    <source>
    </source>
</evidence>
<evidence type="ECO:0000305" key="7"/>
<protein>
    <recommendedName>
        <fullName>PHD finger protein Alfin1</fullName>
    </recommendedName>
</protein>
<comment type="function">
    <text evidence="1 4 5">Histone-binding component that specifically recognizes H3 tails trimethylated on 'Lys-4' (H3K4me3), which mark transcription start sites of virtually all active genes (By similarity). Transcriptional regulator that binds specifically to DNA sequences 5'-GNGGTG-3' or 5'-GTGGNG-3', including promoter elements of the salt-inducible PRP2 gene. Plays a role in salinity tolerance.</text>
</comment>
<comment type="subunit">
    <text evidence="1">Interacts with H3K4me3 and to a lesser extent with H3K4me2.</text>
</comment>
<comment type="subcellular location">
    <subcellularLocation>
        <location evidence="1">Nucleus</location>
    </subcellularLocation>
</comment>
<comment type="tissue specificity">
    <text evidence="6">Predominantly expressed in the roots.</text>
</comment>
<comment type="induction">
    <text evidence="4">By NaCl.</text>
</comment>
<comment type="domain">
    <text evidence="1">The PHD-type zinc finger mediates the binding to H3K4me3.</text>
</comment>
<comment type="similarity">
    <text evidence="7">Belongs to the Alfin family.</text>
</comment>
<keyword id="KW-0156">Chromatin regulator</keyword>
<keyword id="KW-0238">DNA-binding</keyword>
<keyword id="KW-0479">Metal-binding</keyword>
<keyword id="KW-0539">Nucleus</keyword>
<keyword id="KW-0804">Transcription</keyword>
<keyword id="KW-0805">Transcription regulation</keyword>
<keyword id="KW-0862">Zinc</keyword>
<keyword id="KW-0863">Zinc-finger</keyword>
<organism>
    <name type="scientific">Medicago sativa</name>
    <name type="common">Alfalfa</name>
    <dbReference type="NCBI Taxonomy" id="3879"/>
    <lineage>
        <taxon>Eukaryota</taxon>
        <taxon>Viridiplantae</taxon>
        <taxon>Streptophyta</taxon>
        <taxon>Embryophyta</taxon>
        <taxon>Tracheophyta</taxon>
        <taxon>Spermatophyta</taxon>
        <taxon>Magnoliopsida</taxon>
        <taxon>eudicotyledons</taxon>
        <taxon>Gunneridae</taxon>
        <taxon>Pentapetalae</taxon>
        <taxon>rosids</taxon>
        <taxon>fabids</taxon>
        <taxon>Fabales</taxon>
        <taxon>Fabaceae</taxon>
        <taxon>Papilionoideae</taxon>
        <taxon>50 kb inversion clade</taxon>
        <taxon>NPAAA clade</taxon>
        <taxon>Hologalegina</taxon>
        <taxon>IRL clade</taxon>
        <taxon>Trifolieae</taxon>
        <taxon>Medicago</taxon>
    </lineage>
</organism>
<name>ALFIN_MEDSA</name>
<gene>
    <name type="primary">ALFIN-1</name>
</gene>
<dbReference type="EMBL" id="L07291">
    <property type="protein sequence ID" value="AAA20093.2"/>
    <property type="molecule type" value="mRNA"/>
</dbReference>
<dbReference type="PIR" id="T09646">
    <property type="entry name" value="T09646"/>
</dbReference>
<dbReference type="SMR" id="Q40359"/>
<dbReference type="GO" id="GO:0005634">
    <property type="term" value="C:nucleus"/>
    <property type="evidence" value="ECO:0007669"/>
    <property type="project" value="UniProtKB-SubCell"/>
</dbReference>
<dbReference type="GO" id="GO:0003677">
    <property type="term" value="F:DNA binding"/>
    <property type="evidence" value="ECO:0000314"/>
    <property type="project" value="UniProtKB"/>
</dbReference>
<dbReference type="GO" id="GO:0042393">
    <property type="term" value="F:histone binding"/>
    <property type="evidence" value="ECO:0007669"/>
    <property type="project" value="InterPro"/>
</dbReference>
<dbReference type="GO" id="GO:0000976">
    <property type="term" value="F:transcription cis-regulatory region binding"/>
    <property type="evidence" value="ECO:0007669"/>
    <property type="project" value="TreeGrafter"/>
</dbReference>
<dbReference type="GO" id="GO:0003712">
    <property type="term" value="F:transcription coregulator activity"/>
    <property type="evidence" value="ECO:0007669"/>
    <property type="project" value="TreeGrafter"/>
</dbReference>
<dbReference type="GO" id="GO:0008270">
    <property type="term" value="F:zinc ion binding"/>
    <property type="evidence" value="ECO:0007669"/>
    <property type="project" value="UniProtKB-KW"/>
</dbReference>
<dbReference type="GO" id="GO:0071472">
    <property type="term" value="P:cellular response to salt stress"/>
    <property type="evidence" value="ECO:0000314"/>
    <property type="project" value="UniProtKB"/>
</dbReference>
<dbReference type="GO" id="GO:0006325">
    <property type="term" value="P:chromatin organization"/>
    <property type="evidence" value="ECO:0007669"/>
    <property type="project" value="UniProtKB-KW"/>
</dbReference>
<dbReference type="GO" id="GO:0045727">
    <property type="term" value="P:positive regulation of translation"/>
    <property type="evidence" value="ECO:0000314"/>
    <property type="project" value="UniProtKB"/>
</dbReference>
<dbReference type="GO" id="GO:0006355">
    <property type="term" value="P:regulation of DNA-templated transcription"/>
    <property type="evidence" value="ECO:0007669"/>
    <property type="project" value="InterPro"/>
</dbReference>
<dbReference type="GO" id="GO:0009651">
    <property type="term" value="P:response to salt stress"/>
    <property type="evidence" value="ECO:0000270"/>
    <property type="project" value="UniProtKB"/>
</dbReference>
<dbReference type="CDD" id="cd15613">
    <property type="entry name" value="PHD_AL_plant"/>
    <property type="match status" value="1"/>
</dbReference>
<dbReference type="FunFam" id="3.30.40.10:FF:000306">
    <property type="entry name" value="PHD finger alfin-like protein"/>
    <property type="match status" value="1"/>
</dbReference>
<dbReference type="Gene3D" id="3.30.40.10">
    <property type="entry name" value="Zinc/RING finger domain, C3HC4 (zinc finger)"/>
    <property type="match status" value="1"/>
</dbReference>
<dbReference type="InterPro" id="IPR045104">
    <property type="entry name" value="Alfin"/>
</dbReference>
<dbReference type="InterPro" id="IPR021998">
    <property type="entry name" value="Alfin_N"/>
</dbReference>
<dbReference type="InterPro" id="IPR044104">
    <property type="entry name" value="PHD_AL_plant"/>
</dbReference>
<dbReference type="InterPro" id="IPR019786">
    <property type="entry name" value="Zinc_finger_PHD-type_CS"/>
</dbReference>
<dbReference type="InterPro" id="IPR011011">
    <property type="entry name" value="Znf_FYVE_PHD"/>
</dbReference>
<dbReference type="InterPro" id="IPR001965">
    <property type="entry name" value="Znf_PHD"/>
</dbReference>
<dbReference type="InterPro" id="IPR019787">
    <property type="entry name" value="Znf_PHD-finger"/>
</dbReference>
<dbReference type="InterPro" id="IPR013083">
    <property type="entry name" value="Znf_RING/FYVE/PHD"/>
</dbReference>
<dbReference type="PANTHER" id="PTHR12321">
    <property type="entry name" value="CPG BINDING PROTEIN"/>
    <property type="match status" value="1"/>
</dbReference>
<dbReference type="PANTHER" id="PTHR12321:SF60">
    <property type="entry name" value="PHD FINGER PROTEIN ALFIN-LIKE 6"/>
    <property type="match status" value="1"/>
</dbReference>
<dbReference type="Pfam" id="PF12165">
    <property type="entry name" value="Alfin"/>
    <property type="match status" value="1"/>
</dbReference>
<dbReference type="Pfam" id="PF00628">
    <property type="entry name" value="PHD"/>
    <property type="match status" value="1"/>
</dbReference>
<dbReference type="SMART" id="SM00249">
    <property type="entry name" value="PHD"/>
    <property type="match status" value="1"/>
</dbReference>
<dbReference type="SUPFAM" id="SSF57903">
    <property type="entry name" value="FYVE/PHD zinc finger"/>
    <property type="match status" value="1"/>
</dbReference>
<dbReference type="PROSITE" id="PS01359">
    <property type="entry name" value="ZF_PHD_1"/>
    <property type="match status" value="1"/>
</dbReference>
<dbReference type="PROSITE" id="PS50016">
    <property type="entry name" value="ZF_PHD_2"/>
    <property type="match status" value="1"/>
</dbReference>
<sequence>MEGMAQHPVPRTVEEVFSDYKGRRAGLIKALTTDVEKFYQLVDPEKENLCLYGFPNETWEVNLPVEEVPPELPEPALGINFARDGMQEKDWLSLVAVHSDSWLLAVAFYFGARFGFGKNDRKRLFQMINDLPTVFELATGTAKQSKDQLTAHNNGSNSKYKSSGKSRQSESQTKGVKMSAPVKEEVDSGEEEEEDDDEQGATCGACGDNYGTDEFWICCDMCEKWFHGKCVKITPAKAEHIKQYKCPGCSIKKPRIG</sequence>
<feature type="chain" id="PRO_0000412935" description="PHD finger protein Alfin1">
    <location>
        <begin position="1"/>
        <end position="257"/>
    </location>
</feature>
<feature type="zinc finger region" description="PHD-type" evidence="2">
    <location>
        <begin position="200"/>
        <end position="252"/>
    </location>
</feature>
<feature type="region of interest" description="Disordered" evidence="3">
    <location>
        <begin position="145"/>
        <end position="200"/>
    </location>
</feature>
<feature type="compositionally biased region" description="Low complexity" evidence="3">
    <location>
        <begin position="153"/>
        <end position="166"/>
    </location>
</feature>
<feature type="compositionally biased region" description="Acidic residues" evidence="3">
    <location>
        <begin position="187"/>
        <end position="199"/>
    </location>
</feature>
<feature type="site" description="Histone H3K4me3 binding" evidence="1">
    <location>
        <position position="210"/>
    </location>
</feature>
<feature type="site" description="Histone H3K4me3 binding" evidence="1">
    <location>
        <position position="216"/>
    </location>
</feature>
<feature type="site" description="Histone H3K4me3 binding" evidence="1">
    <location>
        <position position="220"/>
    </location>
</feature>
<feature type="site" description="Histone H3K4me3 binding" evidence="1">
    <location>
        <position position="225"/>
    </location>
</feature>
<proteinExistence type="evidence at protein level"/>
<reference key="1">
    <citation type="journal article" date="1993" name="Plant Physiol.">
        <title>cDNA encoding putative zinc finger motifs from salt-tolerant alfalfa (Medicago sativa L.) cells.</title>
        <authorList>
            <person name="Winicov I."/>
        </authorList>
    </citation>
    <scope>NUCLEOTIDE SEQUENCE [MRNA]</scope>
    <source>
        <strain>cv. Regen S / HG2-N1</strain>
        <tissue>Callus</tissue>
    </source>
</reference>
<reference key="2">
    <citation type="journal article" date="1998" name="Plant Mol. Biol.">
        <title>Alfin1, a novel zinc-finger protein in alfalfa roots that binds to promoter elements in the salt-inducible MsPRP2 gene.</title>
        <authorList>
            <person name="Bastola D.R."/>
            <person name="Pethe V.V."/>
            <person name="Winicov I."/>
        </authorList>
    </citation>
    <scope>TISSUE SPECIFICITY</scope>
    <scope>DNA-BINDING</scope>
</reference>
<reference key="3">
    <citation type="journal article" date="1999" name="Plant Physiol.">
        <title>Transgenic overexpression of the transcription factor alfin1 enhances expression of the endogenous MsPRP2 gene in alfalfa and improves salinity tolerance of the plants.</title>
        <authorList>
            <person name="Winicov I."/>
            <person name="Bastola D.R."/>
        </authorList>
    </citation>
    <scope>FUNCTION</scope>
    <scope>INDUCTION BY NACL</scope>
</reference>
<reference key="4">
    <citation type="journal article" date="2000" name="Planta">
        <title>Alfin1 transcription factor overexpression enhances plant root growth under normal and saline conditions and improves salt tolerance in alfalfa.</title>
        <authorList>
            <person name="Winicov I."/>
        </authorList>
    </citation>
    <scope>FUNCTION</scope>
</reference>